<feature type="chain" id="PRO_1000215949" description="Segregation and condensation protein A">
    <location>
        <begin position="1"/>
        <end position="235"/>
    </location>
</feature>
<comment type="function">
    <text evidence="1">Participates in chromosomal partition during cell division. May act via the formation of a condensin-like complex containing Smc and ScpB that pull DNA away from mid-cell into both cell halves.</text>
</comment>
<comment type="subunit">
    <text evidence="1">Component of a cohesin-like complex composed of ScpA, ScpB and the Smc homodimer, in which ScpA and ScpB bind to the head domain of Smc. The presence of the three proteins is required for the association of the complex with DNA.</text>
</comment>
<comment type="subcellular location">
    <subcellularLocation>
        <location evidence="1">Cytoplasm</location>
    </subcellularLocation>
    <text evidence="1">Associated with two foci at the outer edges of the nucleoid region in young cells, and at four foci within both cell halves in older cells.</text>
</comment>
<comment type="similarity">
    <text evidence="1">Belongs to the ScpA family.</text>
</comment>
<proteinExistence type="inferred from homology"/>
<reference key="1">
    <citation type="journal article" date="2009" name="PLoS Pathog.">
        <title>Genomic evidence for the evolution of Streptococcus equi: host restriction, increased virulence, and genetic exchange with human pathogens.</title>
        <authorList>
            <person name="Holden M.T.G."/>
            <person name="Heather Z."/>
            <person name="Paillot R."/>
            <person name="Steward K.F."/>
            <person name="Webb K."/>
            <person name="Ainslie F."/>
            <person name="Jourdan T."/>
            <person name="Bason N.C."/>
            <person name="Holroyd N.E."/>
            <person name="Mungall K."/>
            <person name="Quail M.A."/>
            <person name="Sanders M."/>
            <person name="Simmonds M."/>
            <person name="Willey D."/>
            <person name="Brooks K."/>
            <person name="Aanensen D.M."/>
            <person name="Spratt B.G."/>
            <person name="Jolley K.A."/>
            <person name="Maiden M.C.J."/>
            <person name="Kehoe M."/>
            <person name="Chanter N."/>
            <person name="Bentley S.D."/>
            <person name="Robinson C."/>
            <person name="Maskell D.J."/>
            <person name="Parkhill J."/>
            <person name="Waller A.S."/>
        </authorList>
    </citation>
    <scope>NUCLEOTIDE SEQUENCE [LARGE SCALE GENOMIC DNA]</scope>
    <source>
        <strain>H70</strain>
    </source>
</reference>
<accession>C0MGH0</accession>
<organism>
    <name type="scientific">Streptococcus equi subsp. zooepidemicus (strain H70)</name>
    <dbReference type="NCBI Taxonomy" id="553483"/>
    <lineage>
        <taxon>Bacteria</taxon>
        <taxon>Bacillati</taxon>
        <taxon>Bacillota</taxon>
        <taxon>Bacilli</taxon>
        <taxon>Lactobacillales</taxon>
        <taxon>Streptococcaceae</taxon>
        <taxon>Streptococcus</taxon>
    </lineage>
</organism>
<name>SCPA_STRS7</name>
<keyword id="KW-0131">Cell cycle</keyword>
<keyword id="KW-0132">Cell division</keyword>
<keyword id="KW-0159">Chromosome partition</keyword>
<keyword id="KW-0963">Cytoplasm</keyword>
<protein>
    <recommendedName>
        <fullName evidence="1">Segregation and condensation protein A</fullName>
    </recommendedName>
</protein>
<evidence type="ECO:0000255" key="1">
    <source>
        <dbReference type="HAMAP-Rule" id="MF_01805"/>
    </source>
</evidence>
<dbReference type="EMBL" id="FM204884">
    <property type="protein sequence ID" value="CAW98152.1"/>
    <property type="molecule type" value="Genomic_DNA"/>
</dbReference>
<dbReference type="SMR" id="C0MGH0"/>
<dbReference type="KEGG" id="seq:SZO_03300"/>
<dbReference type="eggNOG" id="COG1354">
    <property type="taxonomic scope" value="Bacteria"/>
</dbReference>
<dbReference type="HOGENOM" id="CLU_038686_3_3_9"/>
<dbReference type="Proteomes" id="UP000001368">
    <property type="component" value="Chromosome"/>
</dbReference>
<dbReference type="GO" id="GO:0005737">
    <property type="term" value="C:cytoplasm"/>
    <property type="evidence" value="ECO:0007669"/>
    <property type="project" value="UniProtKB-SubCell"/>
</dbReference>
<dbReference type="GO" id="GO:0051301">
    <property type="term" value="P:cell division"/>
    <property type="evidence" value="ECO:0007669"/>
    <property type="project" value="UniProtKB-KW"/>
</dbReference>
<dbReference type="GO" id="GO:0007059">
    <property type="term" value="P:chromosome segregation"/>
    <property type="evidence" value="ECO:0007669"/>
    <property type="project" value="UniProtKB-UniRule"/>
</dbReference>
<dbReference type="GO" id="GO:0006260">
    <property type="term" value="P:DNA replication"/>
    <property type="evidence" value="ECO:0007669"/>
    <property type="project" value="UniProtKB-UniRule"/>
</dbReference>
<dbReference type="Gene3D" id="6.10.250.2410">
    <property type="match status" value="1"/>
</dbReference>
<dbReference type="Gene3D" id="1.10.10.580">
    <property type="entry name" value="Structural maintenance of chromosome 1. Chain E"/>
    <property type="match status" value="1"/>
</dbReference>
<dbReference type="HAMAP" id="MF_01805">
    <property type="entry name" value="ScpA"/>
    <property type="match status" value="1"/>
</dbReference>
<dbReference type="InterPro" id="IPR003768">
    <property type="entry name" value="ScpA"/>
</dbReference>
<dbReference type="InterPro" id="IPR023093">
    <property type="entry name" value="ScpA-like_C"/>
</dbReference>
<dbReference type="NCBIfam" id="NF000993">
    <property type="entry name" value="PRK00104.1-2"/>
    <property type="match status" value="1"/>
</dbReference>
<dbReference type="PANTHER" id="PTHR33969">
    <property type="entry name" value="SEGREGATION AND CONDENSATION PROTEIN A"/>
    <property type="match status" value="1"/>
</dbReference>
<dbReference type="PANTHER" id="PTHR33969:SF2">
    <property type="entry name" value="SEGREGATION AND CONDENSATION PROTEIN A"/>
    <property type="match status" value="1"/>
</dbReference>
<dbReference type="Pfam" id="PF02616">
    <property type="entry name" value="SMC_ScpA"/>
    <property type="match status" value="1"/>
</dbReference>
<sequence>MDIKVKDFEGPLDLLLHLVSKYEVDVYQVPIVEVIEQYLAYIETLQTMRLELAGEYMLMASQLMLIKSRRLLPKLVDKEPDEEDLEQELLGKIEEYSRFKALSQELASQHDKRALLFSKPKQELIFEQAVLQKDKTVMDLFLAFSQLMAAKQEAFKYNHTVIERDDYRIEDMMELIEARLELEQELTLTDLLKHCDHLNEAITLFLASLELIKRQLVGIEQTSHFGQIVLRKEIQ</sequence>
<gene>
    <name evidence="1" type="primary">scpA</name>
    <name type="ordered locus">SZO_03300</name>
</gene>